<evidence type="ECO:0000250" key="1">
    <source>
        <dbReference type="UniProtKB" id="O09161"/>
    </source>
</evidence>
<evidence type="ECO:0000250" key="2">
    <source>
        <dbReference type="UniProtKB" id="O14958"/>
    </source>
</evidence>
<evidence type="ECO:0000255" key="3"/>
<evidence type="ECO:0000256" key="4">
    <source>
        <dbReference type="SAM" id="MobiDB-lite"/>
    </source>
</evidence>
<evidence type="ECO:0000269" key="5">
    <source>
    </source>
</evidence>
<evidence type="ECO:0000269" key="6">
    <source>
    </source>
</evidence>
<evidence type="ECO:0000305" key="7"/>
<evidence type="ECO:0007744" key="8">
    <source>
    </source>
</evidence>
<sequence length="413" mass="47839">MKRIYLLVVGLYLLSFSRAEEGLNFPTYDGKDRVVSLSEKNLKQVLKRYDLLCLYYHEPVSSDKVAQKQFQLKEIVLELVAQVLEHKNIGFVMVDSRKEAKLAKRLGFSEEGSLYVLKGGRTIEFDGEFAADVLVEFLLDLIEDPVEIVNNKLEVQAFERIEDQIKLLGFFKNEDSEYYKAFQEAAEHFQPYIKFFATFDKGVAKKLSLKMNEVGFYEPFMDEPSVIPNKPYTEEELVEFVKEHQRPTLRPLRPEDMFETWEDDLNGIHIVAFAEKSDPDGYEFLEILKQVARDNTDNPDLSILWIDPDDFPLLVAYWEKTFKIDLFKPQIGVVNVTDADSVWMEIPDDDDLPTAEELEDWIEDVLSGKINTEDDDNEDEDDDGDNDNDDDDDDDDNSDEDNDDSDDDDDDDE</sequence>
<gene>
    <name type="primary">Casq2</name>
</gene>
<name>CASQ2_RAT</name>
<comment type="function">
    <text evidence="2 6">Calsequestrin is a high-capacity, moderate affinity, calcium-binding protein and thus acts as an internal calcium store in muscle (PubMed:8042990). Calcium ions are bound by clusters of acidic residues at the protein surface, especially at the interface between subunits. Can bind around 60 Ca(2+) ions. Regulates the release of lumenal Ca(2+) via the calcium release channel RYR2; this plays an important role in triggering muscle contraction. Plays a role in excitation-contraction coupling in the heart and in regulating the rate of heart beats (By similarity).</text>
</comment>
<comment type="subunit">
    <text evidence="2">Monomer, homodimer and homooligomer. Mostly monomeric in the absence of calcium. Forms higher oligomers in a calcium-dependent manner. Dimers associate to form tetramers, that then form linear homomer chains. Interacts with ASPH and TRDN (By similarity).</text>
</comment>
<comment type="subcellular location">
    <subcellularLocation>
        <location evidence="1">Sarcoplasmic reticulum lumen</location>
    </subcellularLocation>
    <text evidence="1">This isoform of calsequestrin occurs in the sarcoplasmic reticulum's terminal cisternae luminal spaces of cardiac and slow skeletal muscle cells.</text>
</comment>
<comment type="tissue specificity">
    <text evidence="6">Detected in stomach and vas deferens (at protein level).</text>
</comment>
<comment type="PTM">
    <text evidence="5">Phosphorylation in the C-terminus, probably by CK2, moderately increases calcium buffering capacity.</text>
</comment>
<comment type="PTM">
    <text evidence="2">N-glycosylated.</text>
</comment>
<comment type="similarity">
    <text evidence="7">Belongs to the calsequestrin family.</text>
</comment>
<comment type="sequence caution" evidence="7">
    <conflict type="erroneous initiation">
        <sequence resource="EMBL-CDS" id="AAH72547"/>
    </conflict>
</comment>
<accession>P51868</accession>
<accession>O09177</accession>
<accession>Q6IMX1</accession>
<organism>
    <name type="scientific">Rattus norvegicus</name>
    <name type="common">Rat</name>
    <dbReference type="NCBI Taxonomy" id="10116"/>
    <lineage>
        <taxon>Eukaryota</taxon>
        <taxon>Metazoa</taxon>
        <taxon>Chordata</taxon>
        <taxon>Craniata</taxon>
        <taxon>Vertebrata</taxon>
        <taxon>Euteleostomi</taxon>
        <taxon>Mammalia</taxon>
        <taxon>Eutheria</taxon>
        <taxon>Euarchontoglires</taxon>
        <taxon>Glires</taxon>
        <taxon>Rodentia</taxon>
        <taxon>Myomorpha</taxon>
        <taxon>Muroidea</taxon>
        <taxon>Muridae</taxon>
        <taxon>Murinae</taxon>
        <taxon>Rattus</taxon>
    </lineage>
</organism>
<feature type="signal peptide" evidence="6">
    <location>
        <begin position="1"/>
        <end position="19"/>
    </location>
</feature>
<feature type="chain" id="PRO_0000004221" description="Calsequestrin-2">
    <location>
        <begin position="20"/>
        <end position="413"/>
    </location>
</feature>
<feature type="region of interest" description="Disordered" evidence="4">
    <location>
        <begin position="365"/>
        <end position="413"/>
    </location>
</feature>
<feature type="compositionally biased region" description="Acidic residues" evidence="4">
    <location>
        <begin position="373"/>
        <end position="413"/>
    </location>
</feature>
<feature type="modified residue" description="Phosphotyrosine" evidence="8">
    <location>
        <position position="282"/>
    </location>
</feature>
<feature type="modified residue" description="Phosphoserine" evidence="8">
    <location>
        <position position="398"/>
    </location>
</feature>
<feature type="modified residue" description="Phosphoserine" evidence="8">
    <location>
        <position position="405"/>
    </location>
</feature>
<feature type="glycosylation site" description="N-linked (GlcNAc...) asparagine" evidence="3">
    <location>
        <position position="335"/>
    </location>
</feature>
<feature type="sequence conflict" description="In Ref. 4; AAB58746." evidence="7" ref="4">
    <original>DLL</original>
    <variation>ARV</variation>
    <location>
        <begin position="50"/>
        <end position="52"/>
    </location>
</feature>
<feature type="sequence conflict" description="In Ref. 1; AAA75480." evidence="7" ref="1">
    <original>SLKM</original>
    <variation>FLEV</variation>
    <location>
        <begin position="208"/>
        <end position="211"/>
    </location>
</feature>
<feature type="sequence conflict" description="In Ref. 2; AAH72547." evidence="7" ref="2">
    <original>P</original>
    <variation>R</variation>
    <location>
        <position position="251"/>
    </location>
</feature>
<reference key="1">
    <citation type="submission" date="1995-08" db="EMBL/GenBank/DDBJ databases">
        <authorList>
            <person name="Aquilla T.T."/>
            <person name="Rovner A.S."/>
        </authorList>
    </citation>
    <scope>NUCLEOTIDE SEQUENCE [MRNA]</scope>
    <source>
        <strain>Sprague-Dawley</strain>
        <tissue>Heart muscle</tissue>
    </source>
</reference>
<reference key="2">
    <citation type="journal article" date="2004" name="Genome Res.">
        <title>The status, quality, and expansion of the NIH full-length cDNA project: the Mammalian Gene Collection (MGC).</title>
        <authorList>
            <consortium name="The MGC Project Team"/>
        </authorList>
    </citation>
    <scope>NUCLEOTIDE SEQUENCE [LARGE SCALE MRNA]</scope>
    <source>
        <tissue>Heart</tissue>
    </source>
</reference>
<reference key="3">
    <citation type="journal article" date="1994" name="Biochem. J.">
        <title>Calsequestrin is a component of smooth muscles: the skeletal- and cardiac-muscle isoforms are both present, although in highly variable amounts and ratios.</title>
        <authorList>
            <person name="Volpe P."/>
            <person name="Martini A."/>
            <person name="Furlan S."/>
            <person name="Meldolesi J."/>
        </authorList>
    </citation>
    <scope>PROTEIN SEQUENCE OF 20-30</scope>
    <scope>TISSUE SPECIFICITY</scope>
    <scope>FUNCTION</scope>
    <source>
        <strain>Wistar</strain>
        <tissue>Vas deferens</tissue>
    </source>
</reference>
<reference key="4">
    <citation type="submission" date="1997-06" db="EMBL/GenBank/DDBJ databases">
        <authorList>
            <person name="Rodriguez M.M."/>
            <person name="Chen C."/>
            <person name="Smith B."/>
            <person name="Mochly-Rosen D."/>
        </authorList>
    </citation>
    <scope>NUCLEOTIDE SEQUENCE [GENOMIC DNA] OF 50-413</scope>
    <source>
        <strain>Sprague-Dawley</strain>
    </source>
</reference>
<reference key="5">
    <citation type="journal article" date="2011" name="Mol. Cell. Biochem.">
        <title>The cytosolic protein kinase CK2 phosphorylates cardiac calsequestrin in intact cells.</title>
        <authorList>
            <person name="McFarland T.P."/>
            <person name="Sleiman N.H."/>
            <person name="Yaeger D.B."/>
            <person name="Cala S.E."/>
        </authorList>
    </citation>
    <scope>PHOSPHORYLATION BY CK2</scope>
</reference>
<reference key="6">
    <citation type="journal article" date="2012" name="Nat. Commun.">
        <title>Quantitative maps of protein phosphorylation sites across 14 different rat organs and tissues.</title>
        <authorList>
            <person name="Lundby A."/>
            <person name="Secher A."/>
            <person name="Lage K."/>
            <person name="Nordsborg N.B."/>
            <person name="Dmytriyev A."/>
            <person name="Lundby C."/>
            <person name="Olsen J.V."/>
        </authorList>
    </citation>
    <scope>PHOSPHORYLATION [LARGE SCALE ANALYSIS] AT TYR-282; SER-398 AND SER-405</scope>
    <scope>IDENTIFICATION BY MASS SPECTROMETRY [LARGE SCALE ANALYSIS]</scope>
</reference>
<protein>
    <recommendedName>
        <fullName>Calsequestrin-2</fullName>
    </recommendedName>
    <alternativeName>
        <fullName>Calsequestrin, cardiac muscle isoform</fullName>
    </alternativeName>
</protein>
<proteinExistence type="evidence at protein level"/>
<keyword id="KW-0106">Calcium</keyword>
<keyword id="KW-0903">Direct protein sequencing</keyword>
<keyword id="KW-0325">Glycoprotein</keyword>
<keyword id="KW-0479">Metal-binding</keyword>
<keyword id="KW-0514">Muscle protein</keyword>
<keyword id="KW-0597">Phosphoprotein</keyword>
<keyword id="KW-1185">Reference proteome</keyword>
<keyword id="KW-0703">Sarcoplasmic reticulum</keyword>
<keyword id="KW-0732">Signal</keyword>
<dbReference type="EMBL" id="U33287">
    <property type="protein sequence ID" value="AAA75480.1"/>
    <property type="molecule type" value="mRNA"/>
</dbReference>
<dbReference type="EMBL" id="BC072547">
    <property type="protein sequence ID" value="AAH72547.1"/>
    <property type="status" value="ALT_INIT"/>
    <property type="molecule type" value="mRNA"/>
</dbReference>
<dbReference type="EMBL" id="AF001334">
    <property type="protein sequence ID" value="AAB58746.1"/>
    <property type="molecule type" value="Genomic_DNA"/>
</dbReference>
<dbReference type="RefSeq" id="NP_058827.3">
    <property type="nucleotide sequence ID" value="NM_017131.2"/>
</dbReference>
<dbReference type="SMR" id="P51868"/>
<dbReference type="BioGRID" id="247887">
    <property type="interactions" value="2"/>
</dbReference>
<dbReference type="FunCoup" id="P51868">
    <property type="interactions" value="87"/>
</dbReference>
<dbReference type="IntAct" id="P51868">
    <property type="interactions" value="5"/>
</dbReference>
<dbReference type="MINT" id="P51868"/>
<dbReference type="STRING" id="10116.ENSRNOP00000021846"/>
<dbReference type="GlyCosmos" id="P51868">
    <property type="glycosylation" value="1 site, No reported glycans"/>
</dbReference>
<dbReference type="GlyGen" id="P51868">
    <property type="glycosylation" value="2 sites, 1 O-linked glycan (1 site)"/>
</dbReference>
<dbReference type="iPTMnet" id="P51868"/>
<dbReference type="PhosphoSitePlus" id="P51868"/>
<dbReference type="PaxDb" id="10116-ENSRNOP00000021846"/>
<dbReference type="GeneID" id="29209"/>
<dbReference type="KEGG" id="rno:29209"/>
<dbReference type="UCSC" id="RGD:2276">
    <property type="organism name" value="rat"/>
</dbReference>
<dbReference type="AGR" id="RGD:2276"/>
<dbReference type="CTD" id="845"/>
<dbReference type="RGD" id="2276">
    <property type="gene designation" value="Casq2"/>
</dbReference>
<dbReference type="eggNOG" id="ENOG502QU4Q">
    <property type="taxonomic scope" value="Eukaryota"/>
</dbReference>
<dbReference type="InParanoid" id="P51868"/>
<dbReference type="OrthoDB" id="60205at9989"/>
<dbReference type="PhylomeDB" id="P51868"/>
<dbReference type="Reactome" id="R-RNO-2672351">
    <property type="pathway name" value="Stimuli-sensing channels"/>
</dbReference>
<dbReference type="Reactome" id="R-RNO-5578775">
    <property type="pathway name" value="Ion homeostasis"/>
</dbReference>
<dbReference type="PRO" id="PR:P51868"/>
<dbReference type="Proteomes" id="UP000002494">
    <property type="component" value="Unplaced"/>
</dbReference>
<dbReference type="GO" id="GO:0005737">
    <property type="term" value="C:cytoplasm"/>
    <property type="evidence" value="ECO:0000266"/>
    <property type="project" value="RGD"/>
</dbReference>
<dbReference type="GO" id="GO:0030314">
    <property type="term" value="C:junctional membrane complex"/>
    <property type="evidence" value="ECO:0000266"/>
    <property type="project" value="RGD"/>
</dbReference>
<dbReference type="GO" id="GO:0016529">
    <property type="term" value="C:sarcoplasmic reticulum"/>
    <property type="evidence" value="ECO:0000314"/>
    <property type="project" value="RGD"/>
</dbReference>
<dbReference type="GO" id="GO:0033018">
    <property type="term" value="C:sarcoplasmic reticulum lumen"/>
    <property type="evidence" value="ECO:0000266"/>
    <property type="project" value="RGD"/>
</dbReference>
<dbReference type="GO" id="GO:0030018">
    <property type="term" value="C:Z disc"/>
    <property type="evidence" value="ECO:0000314"/>
    <property type="project" value="BHF-UCL"/>
</dbReference>
<dbReference type="GO" id="GO:0005509">
    <property type="term" value="F:calcium ion binding"/>
    <property type="evidence" value="ECO:0000266"/>
    <property type="project" value="RGD"/>
</dbReference>
<dbReference type="GO" id="GO:0140314">
    <property type="term" value="F:calcium ion sequestering activity"/>
    <property type="evidence" value="ECO:0000266"/>
    <property type="project" value="RGD"/>
</dbReference>
<dbReference type="GO" id="GO:0048306">
    <property type="term" value="F:calcium-dependent protein binding"/>
    <property type="evidence" value="ECO:0000266"/>
    <property type="project" value="RGD"/>
</dbReference>
<dbReference type="GO" id="GO:0042803">
    <property type="term" value="F:protein homodimerization activity"/>
    <property type="evidence" value="ECO:0000314"/>
    <property type="project" value="BHF-UCL"/>
</dbReference>
<dbReference type="GO" id="GO:0005080">
    <property type="term" value="F:protein kinase C binding"/>
    <property type="evidence" value="ECO:0000314"/>
    <property type="project" value="RGD"/>
</dbReference>
<dbReference type="GO" id="GO:0060048">
    <property type="term" value="P:cardiac muscle contraction"/>
    <property type="evidence" value="ECO:0000266"/>
    <property type="project" value="RGD"/>
</dbReference>
<dbReference type="GO" id="GO:0071313">
    <property type="term" value="P:cellular response to caffeine"/>
    <property type="evidence" value="ECO:0000266"/>
    <property type="project" value="RGD"/>
</dbReference>
<dbReference type="GO" id="GO:0006874">
    <property type="term" value="P:intracellular calcium ion homeostasis"/>
    <property type="evidence" value="ECO:0000266"/>
    <property type="project" value="RGD"/>
</dbReference>
<dbReference type="GO" id="GO:0043267">
    <property type="term" value="P:negative regulation of potassium ion transport"/>
    <property type="evidence" value="ECO:0000266"/>
    <property type="project" value="RGD"/>
</dbReference>
<dbReference type="GO" id="GO:0051258">
    <property type="term" value="P:protein polymerization"/>
    <property type="evidence" value="ECO:0000266"/>
    <property type="project" value="RGD"/>
</dbReference>
<dbReference type="GO" id="GO:0086004">
    <property type="term" value="P:regulation of cardiac muscle cell contraction"/>
    <property type="evidence" value="ECO:0000315"/>
    <property type="project" value="BHF-UCL"/>
</dbReference>
<dbReference type="GO" id="GO:0010881">
    <property type="term" value="P:regulation of cardiac muscle contraction by regulation of the release of sequestered calcium ion"/>
    <property type="evidence" value="ECO:0000315"/>
    <property type="project" value="BHF-UCL"/>
</dbReference>
<dbReference type="GO" id="GO:0010649">
    <property type="term" value="P:regulation of cell communication by electrical coupling"/>
    <property type="evidence" value="ECO:0000266"/>
    <property type="project" value="RGD"/>
</dbReference>
<dbReference type="GO" id="GO:0002027">
    <property type="term" value="P:regulation of heart rate"/>
    <property type="evidence" value="ECO:0000266"/>
    <property type="project" value="RGD"/>
</dbReference>
<dbReference type="GO" id="GO:0060306">
    <property type="term" value="P:regulation of membrane repolarization"/>
    <property type="evidence" value="ECO:0000266"/>
    <property type="project" value="RGD"/>
</dbReference>
<dbReference type="GO" id="GO:0010880">
    <property type="term" value="P:regulation of release of sequestered calcium ion into cytosol by sarcoplasmic reticulum"/>
    <property type="evidence" value="ECO:0000266"/>
    <property type="project" value="RGD"/>
</dbReference>
<dbReference type="GO" id="GO:0045214">
    <property type="term" value="P:sarcomere organization"/>
    <property type="evidence" value="ECO:0000266"/>
    <property type="project" value="RGD"/>
</dbReference>
<dbReference type="GO" id="GO:0051208">
    <property type="term" value="P:sequestering of calcium ion"/>
    <property type="evidence" value="ECO:0000266"/>
    <property type="project" value="RGD"/>
</dbReference>
<dbReference type="CDD" id="cd03074">
    <property type="entry name" value="PDI_b'_Calsequestrin_C"/>
    <property type="match status" value="1"/>
</dbReference>
<dbReference type="CDD" id="cd03066">
    <property type="entry name" value="PDI_b_Calsequestrin_middle"/>
    <property type="match status" value="1"/>
</dbReference>
<dbReference type="CDD" id="cd03065">
    <property type="entry name" value="PDI_b_Calsequestrin_N"/>
    <property type="match status" value="1"/>
</dbReference>
<dbReference type="FunFam" id="3.40.30.10:FF:000031">
    <property type="entry name" value="Calsequestrin"/>
    <property type="match status" value="1"/>
</dbReference>
<dbReference type="FunFam" id="3.40.30.10:FF:000033">
    <property type="entry name" value="Calsequestrin"/>
    <property type="match status" value="1"/>
</dbReference>
<dbReference type="FunFam" id="3.40.30.10:FF:000047">
    <property type="entry name" value="Calsequestrin"/>
    <property type="match status" value="1"/>
</dbReference>
<dbReference type="Gene3D" id="3.40.30.10">
    <property type="entry name" value="Glutaredoxin"/>
    <property type="match status" value="3"/>
</dbReference>
<dbReference type="InterPro" id="IPR001393">
    <property type="entry name" value="Calsequestrin"/>
</dbReference>
<dbReference type="InterPro" id="IPR041860">
    <property type="entry name" value="Calsequestrin_C"/>
</dbReference>
<dbReference type="InterPro" id="IPR018233">
    <property type="entry name" value="Calsequestrin_CS"/>
</dbReference>
<dbReference type="InterPro" id="IPR041858">
    <property type="entry name" value="Calsequestrin_middle_dom"/>
</dbReference>
<dbReference type="InterPro" id="IPR041859">
    <property type="entry name" value="Calsequestrin_N"/>
</dbReference>
<dbReference type="InterPro" id="IPR036249">
    <property type="entry name" value="Thioredoxin-like_sf"/>
</dbReference>
<dbReference type="PANTHER" id="PTHR10033">
    <property type="entry name" value="CALSEQUESTRIN"/>
    <property type="match status" value="1"/>
</dbReference>
<dbReference type="PANTHER" id="PTHR10033:SF15">
    <property type="entry name" value="CALSEQUESTRIN-2"/>
    <property type="match status" value="1"/>
</dbReference>
<dbReference type="Pfam" id="PF01216">
    <property type="entry name" value="Calsequestrin"/>
    <property type="match status" value="1"/>
</dbReference>
<dbReference type="PRINTS" id="PR00312">
    <property type="entry name" value="CALSEQUESTRN"/>
</dbReference>
<dbReference type="SUPFAM" id="SSF52833">
    <property type="entry name" value="Thioredoxin-like"/>
    <property type="match status" value="3"/>
</dbReference>
<dbReference type="PROSITE" id="PS00863">
    <property type="entry name" value="CALSEQUESTRIN_1"/>
    <property type="match status" value="1"/>
</dbReference>
<dbReference type="PROSITE" id="PS00864">
    <property type="entry name" value="CALSEQUESTRIN_2"/>
    <property type="match status" value="1"/>
</dbReference>